<reference key="1">
    <citation type="submission" date="2008-06" db="EMBL/GenBank/DDBJ databases">
        <title>Complete sequence of Chlorobium phaeobacteroides BS1.</title>
        <authorList>
            <consortium name="US DOE Joint Genome Institute"/>
            <person name="Lucas S."/>
            <person name="Copeland A."/>
            <person name="Lapidus A."/>
            <person name="Glavina del Rio T."/>
            <person name="Dalin E."/>
            <person name="Tice H."/>
            <person name="Bruce D."/>
            <person name="Goodwin L."/>
            <person name="Pitluck S."/>
            <person name="Schmutz J."/>
            <person name="Larimer F."/>
            <person name="Land M."/>
            <person name="Hauser L."/>
            <person name="Kyrpides N."/>
            <person name="Ovchinnikova G."/>
            <person name="Li T."/>
            <person name="Liu Z."/>
            <person name="Zhao F."/>
            <person name="Overmann J."/>
            <person name="Bryant D.A."/>
            <person name="Richardson P."/>
        </authorList>
    </citation>
    <scope>NUCLEOTIDE SEQUENCE [LARGE SCALE GENOMIC DNA]</scope>
    <source>
        <strain>BS1</strain>
    </source>
</reference>
<feature type="chain" id="PRO_1000114597" description="Nucleoid-associated protein Cphamn1_1179">
    <location>
        <begin position="1"/>
        <end position="111"/>
    </location>
</feature>
<keyword id="KW-0963">Cytoplasm</keyword>
<keyword id="KW-0238">DNA-binding</keyword>
<protein>
    <recommendedName>
        <fullName evidence="1">Nucleoid-associated protein Cphamn1_1179</fullName>
    </recommendedName>
</protein>
<comment type="function">
    <text evidence="1">Binds to DNA and alters its conformation. May be involved in regulation of gene expression, nucleoid organization and DNA protection.</text>
</comment>
<comment type="subunit">
    <text evidence="1">Homodimer.</text>
</comment>
<comment type="subcellular location">
    <subcellularLocation>
        <location evidence="1">Cytoplasm</location>
        <location evidence="1">Nucleoid</location>
    </subcellularLocation>
</comment>
<comment type="similarity">
    <text evidence="1">Belongs to the YbaB/EbfC family.</text>
</comment>
<dbReference type="EMBL" id="CP001101">
    <property type="protein sequence ID" value="ACE04113.1"/>
    <property type="molecule type" value="Genomic_DNA"/>
</dbReference>
<dbReference type="SMR" id="B3EQT2"/>
<dbReference type="STRING" id="331678.Cphamn1_1179"/>
<dbReference type="KEGG" id="cpb:Cphamn1_1179"/>
<dbReference type="eggNOG" id="COG0718">
    <property type="taxonomic scope" value="Bacteria"/>
</dbReference>
<dbReference type="HOGENOM" id="CLU_140930_0_1_10"/>
<dbReference type="OrthoDB" id="9808738at2"/>
<dbReference type="GO" id="GO:0043590">
    <property type="term" value="C:bacterial nucleoid"/>
    <property type="evidence" value="ECO:0007669"/>
    <property type="project" value="UniProtKB-UniRule"/>
</dbReference>
<dbReference type="GO" id="GO:0005829">
    <property type="term" value="C:cytosol"/>
    <property type="evidence" value="ECO:0007669"/>
    <property type="project" value="TreeGrafter"/>
</dbReference>
<dbReference type="GO" id="GO:0003677">
    <property type="term" value="F:DNA binding"/>
    <property type="evidence" value="ECO:0007669"/>
    <property type="project" value="UniProtKB-UniRule"/>
</dbReference>
<dbReference type="Gene3D" id="3.30.1310.10">
    <property type="entry name" value="Nucleoid-associated protein YbaB-like domain"/>
    <property type="match status" value="1"/>
</dbReference>
<dbReference type="HAMAP" id="MF_00274">
    <property type="entry name" value="DNA_YbaB_EbfC"/>
    <property type="match status" value="1"/>
</dbReference>
<dbReference type="InterPro" id="IPR036894">
    <property type="entry name" value="YbaB-like_sf"/>
</dbReference>
<dbReference type="InterPro" id="IPR004401">
    <property type="entry name" value="YbaB/EbfC"/>
</dbReference>
<dbReference type="NCBIfam" id="TIGR00103">
    <property type="entry name" value="DNA_YbaB_EbfC"/>
    <property type="match status" value="1"/>
</dbReference>
<dbReference type="PANTHER" id="PTHR33449">
    <property type="entry name" value="NUCLEOID-ASSOCIATED PROTEIN YBAB"/>
    <property type="match status" value="1"/>
</dbReference>
<dbReference type="PANTHER" id="PTHR33449:SF1">
    <property type="entry name" value="NUCLEOID-ASSOCIATED PROTEIN YBAB"/>
    <property type="match status" value="1"/>
</dbReference>
<dbReference type="Pfam" id="PF02575">
    <property type="entry name" value="YbaB_DNA_bd"/>
    <property type="match status" value="1"/>
</dbReference>
<dbReference type="PIRSF" id="PIRSF004555">
    <property type="entry name" value="UCP004555"/>
    <property type="match status" value="1"/>
</dbReference>
<dbReference type="SUPFAM" id="SSF82607">
    <property type="entry name" value="YbaB-like"/>
    <property type="match status" value="1"/>
</dbReference>
<name>Y1179_CHLPB</name>
<organism>
    <name type="scientific">Chlorobium phaeobacteroides (strain BS1)</name>
    <dbReference type="NCBI Taxonomy" id="331678"/>
    <lineage>
        <taxon>Bacteria</taxon>
        <taxon>Pseudomonadati</taxon>
        <taxon>Chlorobiota</taxon>
        <taxon>Chlorobiia</taxon>
        <taxon>Chlorobiales</taxon>
        <taxon>Chlorobiaceae</taxon>
        <taxon>Chlorobium/Pelodictyon group</taxon>
        <taxon>Chlorobium</taxon>
    </lineage>
</organism>
<sequence>MAMPNFNDMMKQLQQAGAKMQDVQKQLEKITAVGDAGGGMVKATVSGKQKVLSIAIDPEILDDIEMVQDLVVAAVNAALEKAADLAREELSKAAGGMLGGEDMLKNFNIGQ</sequence>
<gene>
    <name type="ordered locus">Cphamn1_1179</name>
</gene>
<accession>B3EQT2</accession>
<proteinExistence type="inferred from homology"/>
<evidence type="ECO:0000255" key="1">
    <source>
        <dbReference type="HAMAP-Rule" id="MF_00274"/>
    </source>
</evidence>